<accession>Q9PRP7</accession>
<reference key="1">
    <citation type="journal article" date="1996" name="J. Biol. Chem.">
        <title>Isolation and characterization of carinactivase, a novel prothrombin activator in Echis carinatus venom with a unique catalytic mechanism.</title>
        <authorList>
            <person name="Yamada D."/>
            <person name="Sekiya F."/>
            <person name="Morita T."/>
        </authorList>
    </citation>
    <scope>PROTEIN SEQUENCE</scope>
    <scope>FUNCTION</scope>
    <scope>COFACTOR</scope>
    <scope>SUBUNIT</scope>
    <source>
        <tissue>Venom</tissue>
    </source>
</reference>
<reference key="2">
    <citation type="journal article" date="1999" name="Thromb. Res.">
        <title>CA-1 method, a novel assay for quantification of normal prothrombin using a Ca2+ -dependent prothrombin activator, carinactivase-1.</title>
        <authorList>
            <person name="Yamada D."/>
            <person name="Morita T."/>
        </authorList>
    </citation>
    <scope>BIOTECHNOLOGY</scope>
</reference>
<feature type="chain" id="PRO_0000326260" description="Snaclec carinactivase-1 regulatory subunit 14 kDa chain">
    <location>
        <begin position="1"/>
        <end position="30" status="greater than"/>
    </location>
</feature>
<feature type="domain" description="C-type lectin" evidence="1">
    <location>
        <begin position="1"/>
        <end position="30" status="greater than"/>
    </location>
</feature>
<feature type="disulfide bond" evidence="1">
    <location>
        <begin position="2"/>
        <end position="13"/>
    </location>
</feature>
<feature type="non-terminal residue">
    <location>
        <position position="30"/>
    </location>
</feature>
<sequence length="30" mass="3736">DCLPDWFHYEGHCYRVFDEPKKWADAEKFC</sequence>
<dbReference type="SMR" id="Q9PRP7"/>
<dbReference type="GO" id="GO:0005576">
    <property type="term" value="C:extracellular region"/>
    <property type="evidence" value="ECO:0007669"/>
    <property type="project" value="UniProtKB-SubCell"/>
</dbReference>
<dbReference type="GO" id="GO:0016504">
    <property type="term" value="F:peptidase activator activity"/>
    <property type="evidence" value="ECO:0007669"/>
    <property type="project" value="UniProtKB-KW"/>
</dbReference>
<dbReference type="GO" id="GO:0090729">
    <property type="term" value="F:toxin activity"/>
    <property type="evidence" value="ECO:0007669"/>
    <property type="project" value="UniProtKB-KW"/>
</dbReference>
<dbReference type="Gene3D" id="3.10.100.10">
    <property type="entry name" value="Mannose-Binding Protein A, subunit A"/>
    <property type="match status" value="1"/>
</dbReference>
<dbReference type="InterPro" id="IPR016186">
    <property type="entry name" value="C-type_lectin-like/link_sf"/>
</dbReference>
<dbReference type="InterPro" id="IPR016187">
    <property type="entry name" value="CTDL_fold"/>
</dbReference>
<dbReference type="SUPFAM" id="SSF56436">
    <property type="entry name" value="C-type lectin-like"/>
    <property type="match status" value="1"/>
</dbReference>
<organism>
    <name type="scientific">Echis carinatus</name>
    <name type="common">Saw-scaled viper</name>
    <dbReference type="NCBI Taxonomy" id="40353"/>
    <lineage>
        <taxon>Eukaryota</taxon>
        <taxon>Metazoa</taxon>
        <taxon>Chordata</taxon>
        <taxon>Craniata</taxon>
        <taxon>Vertebrata</taxon>
        <taxon>Euteleostomi</taxon>
        <taxon>Lepidosauria</taxon>
        <taxon>Squamata</taxon>
        <taxon>Bifurcata</taxon>
        <taxon>Unidentata</taxon>
        <taxon>Episquamata</taxon>
        <taxon>Toxicofera</taxon>
        <taxon>Serpentes</taxon>
        <taxon>Colubroidea</taxon>
        <taxon>Viperidae</taxon>
        <taxon>Viperinae</taxon>
        <taxon>Echis</taxon>
    </lineage>
</organism>
<keyword id="KW-1204">Blood coagulation cascade activating toxin</keyword>
<keyword id="KW-0106">Calcium</keyword>
<keyword id="KW-1217">Cell adhesion impairing toxin</keyword>
<keyword id="KW-0903">Direct protein sequencing</keyword>
<keyword id="KW-1015">Disulfide bond</keyword>
<keyword id="KW-1199">Hemostasis impairing toxin</keyword>
<keyword id="KW-0655">Prothrombin activator</keyword>
<keyword id="KW-0964">Secreted</keyword>
<keyword id="KW-0800">Toxin</keyword>
<proteinExistence type="evidence at protein level"/>
<name>SL114_ECHCA</name>
<evidence type="ECO:0000255" key="1">
    <source>
        <dbReference type="PROSITE-ProRule" id="PRU00040"/>
    </source>
</evidence>
<evidence type="ECO:0000269" key="2">
    <source>
    </source>
</evidence>
<evidence type="ECO:0000269" key="3">
    <source>
    </source>
</evidence>
<evidence type="ECO:0000305" key="4"/>
<protein>
    <recommendedName>
        <fullName>Snaclec carinactivase-1 regulatory subunit 14 kDa chain</fullName>
        <shortName>CA-1 14 kDa subunit</shortName>
    </recommendedName>
    <alternativeName>
        <fullName>CA-1 25 kDa subunit chain 1</fullName>
    </alternativeName>
</protein>
<comment type="function">
    <text evidence="3">Calcium-dependent prothrombin activator. This protein may activate prothrombin via recognition by the regulatory subunit of the calcium ion bound conformation of its gamma-carboxyglutamic acid (GLA) domain, and the subsequent conversion of prothrombin to active thrombin is catalyzed by the catalytic subunit.</text>
</comment>
<comment type="subunit">
    <text evidence="3">Heterodimer of a metalloproteinase subunit and a regulatory subunit comprising two polypeptides disulfide-linked (14 kDa and 17 kDa chains).</text>
</comment>
<comment type="subcellular location">
    <subcellularLocation>
        <location>Secreted</location>
    </subcellularLocation>
</comment>
<comment type="tissue specificity">
    <text>Expressed by the venom gland.</text>
</comment>
<comment type="biotechnology">
    <text evidence="2">Used for quantification of normal prothrombin (CA-1 method).</text>
</comment>
<comment type="similarity">
    <text evidence="4">Belongs to the snaclec family.</text>
</comment>